<organism>
    <name type="scientific">Salmonella typhi</name>
    <dbReference type="NCBI Taxonomy" id="90370"/>
    <lineage>
        <taxon>Bacteria</taxon>
        <taxon>Pseudomonadati</taxon>
        <taxon>Pseudomonadota</taxon>
        <taxon>Gammaproteobacteria</taxon>
        <taxon>Enterobacterales</taxon>
        <taxon>Enterobacteriaceae</taxon>
        <taxon>Salmonella</taxon>
    </lineage>
</organism>
<reference key="1">
    <citation type="journal article" date="2001" name="Nature">
        <title>Complete genome sequence of a multiple drug resistant Salmonella enterica serovar Typhi CT18.</title>
        <authorList>
            <person name="Parkhill J."/>
            <person name="Dougan G."/>
            <person name="James K.D."/>
            <person name="Thomson N.R."/>
            <person name="Pickard D."/>
            <person name="Wain J."/>
            <person name="Churcher C.M."/>
            <person name="Mungall K.L."/>
            <person name="Bentley S.D."/>
            <person name="Holden M.T.G."/>
            <person name="Sebaihia M."/>
            <person name="Baker S."/>
            <person name="Basham D."/>
            <person name="Brooks K."/>
            <person name="Chillingworth T."/>
            <person name="Connerton P."/>
            <person name="Cronin A."/>
            <person name="Davis P."/>
            <person name="Davies R.M."/>
            <person name="Dowd L."/>
            <person name="White N."/>
            <person name="Farrar J."/>
            <person name="Feltwell T."/>
            <person name="Hamlin N."/>
            <person name="Haque A."/>
            <person name="Hien T.T."/>
            <person name="Holroyd S."/>
            <person name="Jagels K."/>
            <person name="Krogh A."/>
            <person name="Larsen T.S."/>
            <person name="Leather S."/>
            <person name="Moule S."/>
            <person name="O'Gaora P."/>
            <person name="Parry C."/>
            <person name="Quail M.A."/>
            <person name="Rutherford K.M."/>
            <person name="Simmonds M."/>
            <person name="Skelton J."/>
            <person name="Stevens K."/>
            <person name="Whitehead S."/>
            <person name="Barrell B.G."/>
        </authorList>
    </citation>
    <scope>NUCLEOTIDE SEQUENCE [LARGE SCALE GENOMIC DNA]</scope>
    <source>
        <strain>CT18</strain>
    </source>
</reference>
<reference key="2">
    <citation type="journal article" date="2003" name="J. Bacteriol.">
        <title>Comparative genomics of Salmonella enterica serovar Typhi strains Ty2 and CT18.</title>
        <authorList>
            <person name="Deng W."/>
            <person name="Liou S.-R."/>
            <person name="Plunkett G. III"/>
            <person name="Mayhew G.F."/>
            <person name="Rose D.J."/>
            <person name="Burland V."/>
            <person name="Kodoyianni V."/>
            <person name="Schwartz D.C."/>
            <person name="Blattner F.R."/>
        </authorList>
    </citation>
    <scope>NUCLEOTIDE SEQUENCE [LARGE SCALE GENOMIC DNA]</scope>
    <source>
        <strain>ATCC 700931 / Ty2</strain>
    </source>
</reference>
<proteinExistence type="inferred from homology"/>
<protein>
    <recommendedName>
        <fullName evidence="1">Molybdenum import ATP-binding protein ModC</fullName>
        <ecNumber evidence="1">7.3.2.5</ecNumber>
    </recommendedName>
</protein>
<sequence>MLELNFSQTLGTHCLTLNETLPASGITAIFGVSGAGKTSLINAISGLTRPRKGRIVLNGRVLHDAENGICLTPEKRRIGYVFQDARLFPHYKVRGNLRYGMAKSMTGQFDKLVSLLGIEALLDRLPGSLSGGEKQRVAIGRALLTAPELLLLDEPLASLDIPRKRELLPYLQRLAREINIPMLYVSHSLDEILHLADKVMVLEDGQVKAFGPLEEVWGSSVMHPWLPKEQQSSILKVSVLEHHPHYAMTALALGDQHLWVNKLNQPLQSTLRIRIQASDVSLVLQPPQQTSIRNVLRAKVANCYDDNGQVEVQLEIGGRTLWARISPWARDELNIKPGLWLYAQVKSVSITA</sequence>
<gene>
    <name evidence="1" type="primary">modC</name>
    <name type="ordered locus">STY0816</name>
    <name type="ordered locus">t2104</name>
</gene>
<dbReference type="EC" id="7.3.2.5" evidence="1"/>
<dbReference type="EMBL" id="AL513382">
    <property type="protein sequence ID" value="CAD05231.1"/>
    <property type="molecule type" value="Genomic_DNA"/>
</dbReference>
<dbReference type="EMBL" id="AE014613">
    <property type="protein sequence ID" value="AAO69721.1"/>
    <property type="molecule type" value="Genomic_DNA"/>
</dbReference>
<dbReference type="RefSeq" id="NP_455325.1">
    <property type="nucleotide sequence ID" value="NC_003198.1"/>
</dbReference>
<dbReference type="RefSeq" id="WP_000891721.1">
    <property type="nucleotide sequence ID" value="NZ_WSUR01000021.1"/>
</dbReference>
<dbReference type="SMR" id="Q8Z8A4"/>
<dbReference type="STRING" id="220341.gene:17584821"/>
<dbReference type="KEGG" id="stt:t2104"/>
<dbReference type="KEGG" id="sty:STY0816"/>
<dbReference type="PATRIC" id="fig|220341.7.peg.820"/>
<dbReference type="eggNOG" id="COG4148">
    <property type="taxonomic scope" value="Bacteria"/>
</dbReference>
<dbReference type="HOGENOM" id="CLU_000604_1_1_6"/>
<dbReference type="OMA" id="QWLYAQI"/>
<dbReference type="OrthoDB" id="9802264at2"/>
<dbReference type="Proteomes" id="UP000000541">
    <property type="component" value="Chromosome"/>
</dbReference>
<dbReference type="Proteomes" id="UP000002670">
    <property type="component" value="Chromosome"/>
</dbReference>
<dbReference type="GO" id="GO:0005886">
    <property type="term" value="C:plasma membrane"/>
    <property type="evidence" value="ECO:0007669"/>
    <property type="project" value="UniProtKB-SubCell"/>
</dbReference>
<dbReference type="GO" id="GO:0015412">
    <property type="term" value="F:ABC-type molybdate transporter activity"/>
    <property type="evidence" value="ECO:0007669"/>
    <property type="project" value="UniProtKB-EC"/>
</dbReference>
<dbReference type="GO" id="GO:0005524">
    <property type="term" value="F:ATP binding"/>
    <property type="evidence" value="ECO:0007669"/>
    <property type="project" value="UniProtKB-KW"/>
</dbReference>
<dbReference type="GO" id="GO:0016887">
    <property type="term" value="F:ATP hydrolysis activity"/>
    <property type="evidence" value="ECO:0007669"/>
    <property type="project" value="InterPro"/>
</dbReference>
<dbReference type="FunFam" id="2.40.50.100:FF:000037">
    <property type="entry name" value="Molybdenum import ATP-binding protein ModC"/>
    <property type="match status" value="1"/>
</dbReference>
<dbReference type="FunFam" id="3.40.50.300:FF:000634">
    <property type="entry name" value="Molybdenum import ATP-binding protein ModC"/>
    <property type="match status" value="1"/>
</dbReference>
<dbReference type="Gene3D" id="2.40.50.100">
    <property type="match status" value="1"/>
</dbReference>
<dbReference type="Gene3D" id="3.40.50.300">
    <property type="entry name" value="P-loop containing nucleotide triphosphate hydrolases"/>
    <property type="match status" value="1"/>
</dbReference>
<dbReference type="InterPro" id="IPR003593">
    <property type="entry name" value="AAA+_ATPase"/>
</dbReference>
<dbReference type="InterPro" id="IPR003439">
    <property type="entry name" value="ABC_transporter-like_ATP-bd"/>
</dbReference>
<dbReference type="InterPro" id="IPR017871">
    <property type="entry name" value="ABC_transporter-like_CS"/>
</dbReference>
<dbReference type="InterPro" id="IPR008995">
    <property type="entry name" value="Mo/tungstate-bd_C_term_dom"/>
</dbReference>
<dbReference type="InterPro" id="IPR011868">
    <property type="entry name" value="ModC_ABC_ATP-bd"/>
</dbReference>
<dbReference type="InterPro" id="IPR050334">
    <property type="entry name" value="Molybdenum_import_ModC"/>
</dbReference>
<dbReference type="InterPro" id="IPR004606">
    <property type="entry name" value="Mop_domain"/>
</dbReference>
<dbReference type="InterPro" id="IPR027417">
    <property type="entry name" value="P-loop_NTPase"/>
</dbReference>
<dbReference type="InterPro" id="IPR005116">
    <property type="entry name" value="Transp-assoc_OB_typ1"/>
</dbReference>
<dbReference type="NCBIfam" id="TIGR02142">
    <property type="entry name" value="modC_ABC"/>
    <property type="match status" value="1"/>
</dbReference>
<dbReference type="NCBIfam" id="TIGR00638">
    <property type="entry name" value="Mop"/>
    <property type="match status" value="1"/>
</dbReference>
<dbReference type="NCBIfam" id="NF008355">
    <property type="entry name" value="PRK11144.1"/>
    <property type="match status" value="1"/>
</dbReference>
<dbReference type="PANTHER" id="PTHR43514">
    <property type="entry name" value="ABC TRANSPORTER I FAMILY MEMBER 10"/>
    <property type="match status" value="1"/>
</dbReference>
<dbReference type="PANTHER" id="PTHR43514:SF4">
    <property type="entry name" value="ABC TRANSPORTER I FAMILY MEMBER 10"/>
    <property type="match status" value="1"/>
</dbReference>
<dbReference type="Pfam" id="PF00005">
    <property type="entry name" value="ABC_tran"/>
    <property type="match status" value="1"/>
</dbReference>
<dbReference type="Pfam" id="PF03459">
    <property type="entry name" value="TOBE"/>
    <property type="match status" value="1"/>
</dbReference>
<dbReference type="SMART" id="SM00382">
    <property type="entry name" value="AAA"/>
    <property type="match status" value="1"/>
</dbReference>
<dbReference type="SUPFAM" id="SSF50331">
    <property type="entry name" value="MOP-like"/>
    <property type="match status" value="1"/>
</dbReference>
<dbReference type="SUPFAM" id="SSF52540">
    <property type="entry name" value="P-loop containing nucleoside triphosphate hydrolases"/>
    <property type="match status" value="1"/>
</dbReference>
<dbReference type="PROSITE" id="PS00211">
    <property type="entry name" value="ABC_TRANSPORTER_1"/>
    <property type="match status" value="1"/>
</dbReference>
<dbReference type="PROSITE" id="PS50893">
    <property type="entry name" value="ABC_TRANSPORTER_2"/>
    <property type="match status" value="1"/>
</dbReference>
<dbReference type="PROSITE" id="PS51241">
    <property type="entry name" value="MODC"/>
    <property type="match status" value="1"/>
</dbReference>
<dbReference type="PROSITE" id="PS51866">
    <property type="entry name" value="MOP"/>
    <property type="match status" value="1"/>
</dbReference>
<name>MODC_SALTI</name>
<accession>Q8Z8A4</accession>
<keyword id="KW-0067">ATP-binding</keyword>
<keyword id="KW-0997">Cell inner membrane</keyword>
<keyword id="KW-1003">Cell membrane</keyword>
<keyword id="KW-0472">Membrane</keyword>
<keyword id="KW-0500">Molybdenum</keyword>
<keyword id="KW-0547">Nucleotide-binding</keyword>
<keyword id="KW-1278">Translocase</keyword>
<keyword id="KW-0813">Transport</keyword>
<feature type="chain" id="PRO_0000092555" description="Molybdenum import ATP-binding protein ModC">
    <location>
        <begin position="1"/>
        <end position="352"/>
    </location>
</feature>
<feature type="domain" description="ABC transporter" evidence="1">
    <location>
        <begin position="1"/>
        <end position="229"/>
    </location>
</feature>
<feature type="domain" description="Mop" evidence="2">
    <location>
        <begin position="289"/>
        <end position="352"/>
    </location>
</feature>
<feature type="binding site" evidence="1">
    <location>
        <begin position="31"/>
        <end position="38"/>
    </location>
    <ligand>
        <name>ATP</name>
        <dbReference type="ChEBI" id="CHEBI:30616"/>
    </ligand>
</feature>
<evidence type="ECO:0000255" key="1">
    <source>
        <dbReference type="HAMAP-Rule" id="MF_01705"/>
    </source>
</evidence>
<evidence type="ECO:0000255" key="2">
    <source>
        <dbReference type="PROSITE-ProRule" id="PRU01213"/>
    </source>
</evidence>
<comment type="function">
    <text evidence="1">Part of the ABC transporter complex ModABC involved in molybdenum import. Responsible for energy coupling to the transport system.</text>
</comment>
<comment type="catalytic activity">
    <reaction evidence="1">
        <text>molybdate(out) + ATP + H2O = molybdate(in) + ADP + phosphate + H(+)</text>
        <dbReference type="Rhea" id="RHEA:22020"/>
        <dbReference type="ChEBI" id="CHEBI:15377"/>
        <dbReference type="ChEBI" id="CHEBI:15378"/>
        <dbReference type="ChEBI" id="CHEBI:30616"/>
        <dbReference type="ChEBI" id="CHEBI:36264"/>
        <dbReference type="ChEBI" id="CHEBI:43474"/>
        <dbReference type="ChEBI" id="CHEBI:456216"/>
        <dbReference type="EC" id="7.3.2.5"/>
    </reaction>
</comment>
<comment type="subunit">
    <text evidence="1">The complex is composed of two ATP-binding proteins (ModC), two transmembrane proteins (ModB) and a solute-binding protein (ModA).</text>
</comment>
<comment type="subcellular location">
    <subcellularLocation>
        <location evidence="1">Cell inner membrane</location>
        <topology evidence="1">Peripheral membrane protein</topology>
    </subcellularLocation>
</comment>
<comment type="similarity">
    <text evidence="1">Belongs to the ABC transporter superfamily. Molybdate importer (TC 3.A.1.8) family.</text>
</comment>